<proteinExistence type="inferred from homology"/>
<name>DXR_RHOJR</name>
<gene>
    <name evidence="1" type="primary">dxr</name>
    <name type="ordered locus">RHA1_ro06588</name>
</gene>
<protein>
    <recommendedName>
        <fullName evidence="1">1-deoxy-D-xylulose 5-phosphate reductoisomerase</fullName>
        <shortName evidence="1">DXP reductoisomerase</shortName>
        <ecNumber evidence="1">1.1.1.267</ecNumber>
    </recommendedName>
    <alternativeName>
        <fullName evidence="1">1-deoxyxylulose-5-phosphate reductoisomerase</fullName>
    </alternativeName>
    <alternativeName>
        <fullName evidence="1">2-C-methyl-D-erythritol 4-phosphate synthase</fullName>
    </alternativeName>
</protein>
<organism>
    <name type="scientific">Rhodococcus jostii (strain RHA1)</name>
    <dbReference type="NCBI Taxonomy" id="101510"/>
    <lineage>
        <taxon>Bacteria</taxon>
        <taxon>Bacillati</taxon>
        <taxon>Actinomycetota</taxon>
        <taxon>Actinomycetes</taxon>
        <taxon>Mycobacteriales</taxon>
        <taxon>Nocardiaceae</taxon>
        <taxon>Rhodococcus</taxon>
    </lineage>
</organism>
<feature type="chain" id="PRO_1000020303" description="1-deoxy-D-xylulose 5-phosphate reductoisomerase">
    <location>
        <begin position="1"/>
        <end position="398"/>
    </location>
</feature>
<feature type="binding site" evidence="1">
    <location>
        <position position="28"/>
    </location>
    <ligand>
        <name>NADPH</name>
        <dbReference type="ChEBI" id="CHEBI:57783"/>
    </ligand>
</feature>
<feature type="binding site" evidence="1">
    <location>
        <position position="29"/>
    </location>
    <ligand>
        <name>NADPH</name>
        <dbReference type="ChEBI" id="CHEBI:57783"/>
    </ligand>
</feature>
<feature type="binding site" evidence="1">
    <location>
        <position position="30"/>
    </location>
    <ligand>
        <name>NADPH</name>
        <dbReference type="ChEBI" id="CHEBI:57783"/>
    </ligand>
</feature>
<feature type="binding site" evidence="1">
    <location>
        <position position="31"/>
    </location>
    <ligand>
        <name>NADPH</name>
        <dbReference type="ChEBI" id="CHEBI:57783"/>
    </ligand>
</feature>
<feature type="binding site" evidence="1">
    <location>
        <position position="54"/>
    </location>
    <ligand>
        <name>NADPH</name>
        <dbReference type="ChEBI" id="CHEBI:57783"/>
    </ligand>
</feature>
<feature type="binding site" evidence="1">
    <location>
        <position position="57"/>
    </location>
    <ligand>
        <name>NADPH</name>
        <dbReference type="ChEBI" id="CHEBI:57783"/>
    </ligand>
</feature>
<feature type="binding site" evidence="1">
    <location>
        <position position="135"/>
    </location>
    <ligand>
        <name>NADPH</name>
        <dbReference type="ChEBI" id="CHEBI:57783"/>
    </ligand>
</feature>
<feature type="binding site" evidence="1">
    <location>
        <position position="136"/>
    </location>
    <ligand>
        <name>1-deoxy-D-xylulose 5-phosphate</name>
        <dbReference type="ChEBI" id="CHEBI:57792"/>
    </ligand>
</feature>
<feature type="binding site" evidence="1">
    <location>
        <position position="137"/>
    </location>
    <ligand>
        <name>NADPH</name>
        <dbReference type="ChEBI" id="CHEBI:57783"/>
    </ligand>
</feature>
<feature type="binding site" evidence="1">
    <location>
        <position position="159"/>
    </location>
    <ligand>
        <name>Mn(2+)</name>
        <dbReference type="ChEBI" id="CHEBI:29035"/>
    </ligand>
</feature>
<feature type="binding site" evidence="1">
    <location>
        <position position="160"/>
    </location>
    <ligand>
        <name>1-deoxy-D-xylulose 5-phosphate</name>
        <dbReference type="ChEBI" id="CHEBI:57792"/>
    </ligand>
</feature>
<feature type="binding site" evidence="1">
    <location>
        <position position="161"/>
    </location>
    <ligand>
        <name>1-deoxy-D-xylulose 5-phosphate</name>
        <dbReference type="ChEBI" id="CHEBI:57792"/>
    </ligand>
</feature>
<feature type="binding site" evidence="1">
    <location>
        <position position="161"/>
    </location>
    <ligand>
        <name>Mn(2+)</name>
        <dbReference type="ChEBI" id="CHEBI:29035"/>
    </ligand>
</feature>
<feature type="binding site" evidence="1">
    <location>
        <position position="185"/>
    </location>
    <ligand>
        <name>1-deoxy-D-xylulose 5-phosphate</name>
        <dbReference type="ChEBI" id="CHEBI:57792"/>
    </ligand>
</feature>
<feature type="binding site" evidence="1">
    <location>
        <position position="208"/>
    </location>
    <ligand>
        <name>1-deoxy-D-xylulose 5-phosphate</name>
        <dbReference type="ChEBI" id="CHEBI:57792"/>
    </ligand>
</feature>
<feature type="binding site" evidence="1">
    <location>
        <position position="214"/>
    </location>
    <ligand>
        <name>NADPH</name>
        <dbReference type="ChEBI" id="CHEBI:57783"/>
    </ligand>
</feature>
<feature type="binding site" evidence="1">
    <location>
        <position position="221"/>
    </location>
    <ligand>
        <name>1-deoxy-D-xylulose 5-phosphate</name>
        <dbReference type="ChEBI" id="CHEBI:57792"/>
    </ligand>
</feature>
<feature type="binding site" evidence="1">
    <location>
        <position position="226"/>
    </location>
    <ligand>
        <name>1-deoxy-D-xylulose 5-phosphate</name>
        <dbReference type="ChEBI" id="CHEBI:57792"/>
    </ligand>
</feature>
<feature type="binding site" evidence="1">
    <location>
        <position position="227"/>
    </location>
    <ligand>
        <name>1-deoxy-D-xylulose 5-phosphate</name>
        <dbReference type="ChEBI" id="CHEBI:57792"/>
    </ligand>
</feature>
<feature type="binding site" evidence="1">
    <location>
        <position position="230"/>
    </location>
    <ligand>
        <name>1-deoxy-D-xylulose 5-phosphate</name>
        <dbReference type="ChEBI" id="CHEBI:57792"/>
    </ligand>
</feature>
<feature type="binding site" evidence="1">
    <location>
        <position position="230"/>
    </location>
    <ligand>
        <name>Mn(2+)</name>
        <dbReference type="ChEBI" id="CHEBI:29035"/>
    </ligand>
</feature>
<sequence length="398" mass="41238">MAGGPHFIRKNGWVDENRPTRVLLLGSTGSIGTQALEVVAANPDKFTVVGLAAGGANVELLDRQIRETGVSSVAVADPSAAASLARPGVLSGPDAVTELVRTTEADVVLNALVGSLGLEPTLAALESGARLALANKESLVAGGPLVTAAAAPGQIVPVDSEHSALAQCLRGGSADEVDRLVLTASGGPFRGWTADRLESVTPEQAGAHPTWSMGPMNTLNSATLVNKGLELIETHLLFGVDYDRIDVTVHPQSIVHSMVTFTDGSTLAQASPPDMKLPIALALGWPHRIAGAAAACDFSTASTWDFEPLDSQVFPAVDLAREAGKGGGCLTAVYNAANEVAAQAFLDGIIRFPRIVRTVASVLSEADEWSAPPATVEDVLAADGWARERARQLVKQEG</sequence>
<keyword id="KW-0414">Isoprene biosynthesis</keyword>
<keyword id="KW-0464">Manganese</keyword>
<keyword id="KW-0479">Metal-binding</keyword>
<keyword id="KW-0521">NADP</keyword>
<keyword id="KW-0560">Oxidoreductase</keyword>
<dbReference type="EC" id="1.1.1.267" evidence="1"/>
<dbReference type="EMBL" id="CP000431">
    <property type="protein sequence ID" value="ABG98361.1"/>
    <property type="molecule type" value="Genomic_DNA"/>
</dbReference>
<dbReference type="SMR" id="Q0S275"/>
<dbReference type="KEGG" id="rha:RHA1_ro06588"/>
<dbReference type="eggNOG" id="COG0743">
    <property type="taxonomic scope" value="Bacteria"/>
</dbReference>
<dbReference type="HOGENOM" id="CLU_035714_4_0_11"/>
<dbReference type="UniPathway" id="UPA00056">
    <property type="reaction ID" value="UER00092"/>
</dbReference>
<dbReference type="Proteomes" id="UP000008710">
    <property type="component" value="Chromosome"/>
</dbReference>
<dbReference type="GO" id="GO:0030604">
    <property type="term" value="F:1-deoxy-D-xylulose-5-phosphate reductoisomerase activity"/>
    <property type="evidence" value="ECO:0007669"/>
    <property type="project" value="UniProtKB-UniRule"/>
</dbReference>
<dbReference type="GO" id="GO:0030145">
    <property type="term" value="F:manganese ion binding"/>
    <property type="evidence" value="ECO:0007669"/>
    <property type="project" value="TreeGrafter"/>
</dbReference>
<dbReference type="GO" id="GO:0070402">
    <property type="term" value="F:NADPH binding"/>
    <property type="evidence" value="ECO:0007669"/>
    <property type="project" value="InterPro"/>
</dbReference>
<dbReference type="GO" id="GO:0051484">
    <property type="term" value="P:isopentenyl diphosphate biosynthetic process, methylerythritol 4-phosphate pathway involved in terpenoid biosynthetic process"/>
    <property type="evidence" value="ECO:0007669"/>
    <property type="project" value="TreeGrafter"/>
</dbReference>
<dbReference type="FunFam" id="3.40.50.720:FF:000045">
    <property type="entry name" value="1-deoxy-D-xylulose 5-phosphate reductoisomerase"/>
    <property type="match status" value="1"/>
</dbReference>
<dbReference type="Gene3D" id="1.10.1740.10">
    <property type="match status" value="1"/>
</dbReference>
<dbReference type="Gene3D" id="3.40.50.720">
    <property type="entry name" value="NAD(P)-binding Rossmann-like Domain"/>
    <property type="match status" value="1"/>
</dbReference>
<dbReference type="HAMAP" id="MF_00183">
    <property type="entry name" value="DXP_reductoisom"/>
    <property type="match status" value="1"/>
</dbReference>
<dbReference type="InterPro" id="IPR003821">
    <property type="entry name" value="DXP_reductoisomerase"/>
</dbReference>
<dbReference type="InterPro" id="IPR013644">
    <property type="entry name" value="DXP_reductoisomerase_C"/>
</dbReference>
<dbReference type="InterPro" id="IPR013512">
    <property type="entry name" value="DXP_reductoisomerase_N"/>
</dbReference>
<dbReference type="InterPro" id="IPR026877">
    <property type="entry name" value="DXPR_C"/>
</dbReference>
<dbReference type="InterPro" id="IPR036169">
    <property type="entry name" value="DXPR_C_sf"/>
</dbReference>
<dbReference type="InterPro" id="IPR036291">
    <property type="entry name" value="NAD(P)-bd_dom_sf"/>
</dbReference>
<dbReference type="NCBIfam" id="TIGR00243">
    <property type="entry name" value="Dxr"/>
    <property type="match status" value="1"/>
</dbReference>
<dbReference type="PANTHER" id="PTHR30525">
    <property type="entry name" value="1-DEOXY-D-XYLULOSE 5-PHOSPHATE REDUCTOISOMERASE"/>
    <property type="match status" value="1"/>
</dbReference>
<dbReference type="PANTHER" id="PTHR30525:SF0">
    <property type="entry name" value="1-DEOXY-D-XYLULOSE 5-PHOSPHATE REDUCTOISOMERASE, CHLOROPLASTIC"/>
    <property type="match status" value="1"/>
</dbReference>
<dbReference type="Pfam" id="PF08436">
    <property type="entry name" value="DXP_redisom_C"/>
    <property type="match status" value="1"/>
</dbReference>
<dbReference type="Pfam" id="PF02670">
    <property type="entry name" value="DXP_reductoisom"/>
    <property type="match status" value="1"/>
</dbReference>
<dbReference type="Pfam" id="PF13288">
    <property type="entry name" value="DXPR_C"/>
    <property type="match status" value="1"/>
</dbReference>
<dbReference type="PIRSF" id="PIRSF006205">
    <property type="entry name" value="Dxp_reductismrs"/>
    <property type="match status" value="1"/>
</dbReference>
<dbReference type="SUPFAM" id="SSF69055">
    <property type="entry name" value="1-deoxy-D-xylulose-5-phosphate reductoisomerase, C-terminal domain"/>
    <property type="match status" value="1"/>
</dbReference>
<dbReference type="SUPFAM" id="SSF55347">
    <property type="entry name" value="Glyceraldehyde-3-phosphate dehydrogenase-like, C-terminal domain"/>
    <property type="match status" value="1"/>
</dbReference>
<dbReference type="SUPFAM" id="SSF51735">
    <property type="entry name" value="NAD(P)-binding Rossmann-fold domains"/>
    <property type="match status" value="1"/>
</dbReference>
<comment type="function">
    <text evidence="1">Catalyzes the NADPH-dependent rearrangement and reduction of 1-deoxy-D-xylulose-5-phosphate (DXP) to 2-C-methyl-D-erythritol 4-phosphate (MEP).</text>
</comment>
<comment type="catalytic activity">
    <reaction evidence="1">
        <text>2-C-methyl-D-erythritol 4-phosphate + NADP(+) = 1-deoxy-D-xylulose 5-phosphate + NADPH + H(+)</text>
        <dbReference type="Rhea" id="RHEA:13717"/>
        <dbReference type="ChEBI" id="CHEBI:15378"/>
        <dbReference type="ChEBI" id="CHEBI:57783"/>
        <dbReference type="ChEBI" id="CHEBI:57792"/>
        <dbReference type="ChEBI" id="CHEBI:58262"/>
        <dbReference type="ChEBI" id="CHEBI:58349"/>
        <dbReference type="EC" id="1.1.1.267"/>
    </reaction>
    <physiologicalReaction direction="right-to-left" evidence="1">
        <dbReference type="Rhea" id="RHEA:13719"/>
    </physiologicalReaction>
</comment>
<comment type="cofactor">
    <cofactor evidence="1">
        <name>Mg(2+)</name>
        <dbReference type="ChEBI" id="CHEBI:18420"/>
    </cofactor>
    <cofactor evidence="1">
        <name>Mn(2+)</name>
        <dbReference type="ChEBI" id="CHEBI:29035"/>
    </cofactor>
</comment>
<comment type="pathway">
    <text evidence="1">Isoprenoid biosynthesis; isopentenyl diphosphate biosynthesis via DXP pathway; isopentenyl diphosphate from 1-deoxy-D-xylulose 5-phosphate: step 1/6.</text>
</comment>
<comment type="similarity">
    <text evidence="1">Belongs to the DXR family.</text>
</comment>
<reference key="1">
    <citation type="journal article" date="2006" name="Proc. Natl. Acad. Sci. U.S.A.">
        <title>The complete genome of Rhodococcus sp. RHA1 provides insights into a catabolic powerhouse.</title>
        <authorList>
            <person name="McLeod M.P."/>
            <person name="Warren R.L."/>
            <person name="Hsiao W.W.L."/>
            <person name="Araki N."/>
            <person name="Myhre M."/>
            <person name="Fernandes C."/>
            <person name="Miyazawa D."/>
            <person name="Wong W."/>
            <person name="Lillquist A.L."/>
            <person name="Wang D."/>
            <person name="Dosanjh M."/>
            <person name="Hara H."/>
            <person name="Petrescu A."/>
            <person name="Morin R.D."/>
            <person name="Yang G."/>
            <person name="Stott J.M."/>
            <person name="Schein J.E."/>
            <person name="Shin H."/>
            <person name="Smailus D."/>
            <person name="Siddiqui A.S."/>
            <person name="Marra M.A."/>
            <person name="Jones S.J.M."/>
            <person name="Holt R."/>
            <person name="Brinkman F.S.L."/>
            <person name="Miyauchi K."/>
            <person name="Fukuda M."/>
            <person name="Davies J.E."/>
            <person name="Mohn W.W."/>
            <person name="Eltis L.D."/>
        </authorList>
    </citation>
    <scope>NUCLEOTIDE SEQUENCE [LARGE SCALE GENOMIC DNA]</scope>
    <source>
        <strain>RHA1</strain>
    </source>
</reference>
<evidence type="ECO:0000255" key="1">
    <source>
        <dbReference type="HAMAP-Rule" id="MF_00183"/>
    </source>
</evidence>
<accession>Q0S275</accession>